<proteinExistence type="inferred from homology"/>
<reference key="1">
    <citation type="journal article" date="2010" name="PLoS ONE">
        <title>The complete multipartite genome sequence of Cupriavidus necator JMP134, a versatile pollutant degrader.</title>
        <authorList>
            <person name="Lykidis A."/>
            <person name="Perez-Pantoja D."/>
            <person name="Ledger T."/>
            <person name="Mavromatis K."/>
            <person name="Anderson I.J."/>
            <person name="Ivanova N.N."/>
            <person name="Hooper S.D."/>
            <person name="Lapidus A."/>
            <person name="Lucas S."/>
            <person name="Gonzalez B."/>
            <person name="Kyrpides N.C."/>
        </authorList>
    </citation>
    <scope>NUCLEOTIDE SEQUENCE [LARGE SCALE GENOMIC DNA]</scope>
    <source>
        <strain>JMP134 / LMG 1197</strain>
    </source>
</reference>
<accession>Q46WG9</accession>
<protein>
    <recommendedName>
        <fullName evidence="1">DNA-directed RNA polymerase subunit alpha</fullName>
        <shortName evidence="1">RNAP subunit alpha</shortName>
        <ecNumber evidence="1">2.7.7.6</ecNumber>
    </recommendedName>
    <alternativeName>
        <fullName evidence="1">RNA polymerase subunit alpha</fullName>
    </alternativeName>
    <alternativeName>
        <fullName evidence="1">Transcriptase subunit alpha</fullName>
    </alternativeName>
</protein>
<feature type="chain" id="PRO_0000225296" description="DNA-directed RNA polymerase subunit alpha">
    <location>
        <begin position="1"/>
        <end position="326"/>
    </location>
</feature>
<feature type="region of interest" description="Alpha N-terminal domain (alpha-NTD)" evidence="1">
    <location>
        <begin position="1"/>
        <end position="231"/>
    </location>
</feature>
<feature type="region of interest" description="Alpha C-terminal domain (alpha-CTD)" evidence="1">
    <location>
        <begin position="247"/>
        <end position="326"/>
    </location>
</feature>
<evidence type="ECO:0000255" key="1">
    <source>
        <dbReference type="HAMAP-Rule" id="MF_00059"/>
    </source>
</evidence>
<gene>
    <name evidence="1" type="primary">rpoA</name>
    <name type="ordered locus">Reut_A3154</name>
</gene>
<sequence length="326" mass="35674">MQTALLKPKIIAVEPLGDHHAKVVMEPFERGYGHTLGNALRRVLLSSMVGYAPTEVTIAGVVHEYSTIDGVQEDVVNLLLNLKGVVFKLHNRDEVTVSLRKDGEGIVTAADIELPHDVEIINPNHVIAHLSAGGKLDMQIKVEQGRGYVPGNVRKFGDESSKVIGRIVLDASFSPVRRVSYAVESARVEQRTDLDKLVMNIETDGVISPEEAIRQSARILVDQLSVFAALEGTESAAEAASSRAPQIDPILLRPVDDLELTVRSANCLKAENIYYIGDLIQRTENELLKTPNLGRKSLNEIKEVLASRGLTLGMKLENWPPAGLDK</sequence>
<keyword id="KW-0240">DNA-directed RNA polymerase</keyword>
<keyword id="KW-0548">Nucleotidyltransferase</keyword>
<keyword id="KW-0804">Transcription</keyword>
<keyword id="KW-0808">Transferase</keyword>
<dbReference type="EC" id="2.7.7.6" evidence="1"/>
<dbReference type="EMBL" id="CP000090">
    <property type="protein sequence ID" value="AAZ62514.1"/>
    <property type="molecule type" value="Genomic_DNA"/>
</dbReference>
<dbReference type="SMR" id="Q46WG9"/>
<dbReference type="STRING" id="264198.Reut_A3154"/>
<dbReference type="KEGG" id="reu:Reut_A3154"/>
<dbReference type="eggNOG" id="COG0202">
    <property type="taxonomic scope" value="Bacteria"/>
</dbReference>
<dbReference type="HOGENOM" id="CLU_053084_0_0_4"/>
<dbReference type="OrthoDB" id="9805706at2"/>
<dbReference type="GO" id="GO:0005737">
    <property type="term" value="C:cytoplasm"/>
    <property type="evidence" value="ECO:0007669"/>
    <property type="project" value="UniProtKB-ARBA"/>
</dbReference>
<dbReference type="GO" id="GO:0000428">
    <property type="term" value="C:DNA-directed RNA polymerase complex"/>
    <property type="evidence" value="ECO:0007669"/>
    <property type="project" value="UniProtKB-KW"/>
</dbReference>
<dbReference type="GO" id="GO:0003677">
    <property type="term" value="F:DNA binding"/>
    <property type="evidence" value="ECO:0007669"/>
    <property type="project" value="UniProtKB-UniRule"/>
</dbReference>
<dbReference type="GO" id="GO:0003899">
    <property type="term" value="F:DNA-directed RNA polymerase activity"/>
    <property type="evidence" value="ECO:0007669"/>
    <property type="project" value="UniProtKB-UniRule"/>
</dbReference>
<dbReference type="GO" id="GO:0046983">
    <property type="term" value="F:protein dimerization activity"/>
    <property type="evidence" value="ECO:0007669"/>
    <property type="project" value="InterPro"/>
</dbReference>
<dbReference type="GO" id="GO:0006351">
    <property type="term" value="P:DNA-templated transcription"/>
    <property type="evidence" value="ECO:0007669"/>
    <property type="project" value="UniProtKB-UniRule"/>
</dbReference>
<dbReference type="CDD" id="cd06928">
    <property type="entry name" value="RNAP_alpha_NTD"/>
    <property type="match status" value="1"/>
</dbReference>
<dbReference type="FunFam" id="1.10.150.20:FF:000001">
    <property type="entry name" value="DNA-directed RNA polymerase subunit alpha"/>
    <property type="match status" value="1"/>
</dbReference>
<dbReference type="FunFam" id="2.170.120.12:FF:000001">
    <property type="entry name" value="DNA-directed RNA polymerase subunit alpha"/>
    <property type="match status" value="1"/>
</dbReference>
<dbReference type="Gene3D" id="1.10.150.20">
    <property type="entry name" value="5' to 3' exonuclease, C-terminal subdomain"/>
    <property type="match status" value="1"/>
</dbReference>
<dbReference type="Gene3D" id="2.170.120.12">
    <property type="entry name" value="DNA-directed RNA polymerase, insert domain"/>
    <property type="match status" value="1"/>
</dbReference>
<dbReference type="Gene3D" id="3.30.1360.10">
    <property type="entry name" value="RNA polymerase, RBP11-like subunit"/>
    <property type="match status" value="1"/>
</dbReference>
<dbReference type="HAMAP" id="MF_00059">
    <property type="entry name" value="RNApol_bact_RpoA"/>
    <property type="match status" value="1"/>
</dbReference>
<dbReference type="InterPro" id="IPR011262">
    <property type="entry name" value="DNA-dir_RNA_pol_insert"/>
</dbReference>
<dbReference type="InterPro" id="IPR011263">
    <property type="entry name" value="DNA-dir_RNA_pol_RpoA/D/Rpb3"/>
</dbReference>
<dbReference type="InterPro" id="IPR011773">
    <property type="entry name" value="DNA-dir_RpoA"/>
</dbReference>
<dbReference type="InterPro" id="IPR036603">
    <property type="entry name" value="RBP11-like"/>
</dbReference>
<dbReference type="InterPro" id="IPR011260">
    <property type="entry name" value="RNAP_asu_C"/>
</dbReference>
<dbReference type="InterPro" id="IPR036643">
    <property type="entry name" value="RNApol_insert_sf"/>
</dbReference>
<dbReference type="NCBIfam" id="NF003513">
    <property type="entry name" value="PRK05182.1-2"/>
    <property type="match status" value="1"/>
</dbReference>
<dbReference type="NCBIfam" id="NF003519">
    <property type="entry name" value="PRK05182.2-5"/>
    <property type="match status" value="1"/>
</dbReference>
<dbReference type="NCBIfam" id="TIGR02027">
    <property type="entry name" value="rpoA"/>
    <property type="match status" value="1"/>
</dbReference>
<dbReference type="Pfam" id="PF01000">
    <property type="entry name" value="RNA_pol_A_bac"/>
    <property type="match status" value="1"/>
</dbReference>
<dbReference type="Pfam" id="PF03118">
    <property type="entry name" value="RNA_pol_A_CTD"/>
    <property type="match status" value="1"/>
</dbReference>
<dbReference type="Pfam" id="PF01193">
    <property type="entry name" value="RNA_pol_L"/>
    <property type="match status" value="1"/>
</dbReference>
<dbReference type="SMART" id="SM00662">
    <property type="entry name" value="RPOLD"/>
    <property type="match status" value="1"/>
</dbReference>
<dbReference type="SUPFAM" id="SSF47789">
    <property type="entry name" value="C-terminal domain of RNA polymerase alpha subunit"/>
    <property type="match status" value="1"/>
</dbReference>
<dbReference type="SUPFAM" id="SSF56553">
    <property type="entry name" value="Insert subdomain of RNA polymerase alpha subunit"/>
    <property type="match status" value="1"/>
</dbReference>
<dbReference type="SUPFAM" id="SSF55257">
    <property type="entry name" value="RBP11-like subunits of RNA polymerase"/>
    <property type="match status" value="1"/>
</dbReference>
<organism>
    <name type="scientific">Cupriavidus pinatubonensis (strain JMP 134 / LMG 1197)</name>
    <name type="common">Cupriavidus necator (strain JMP 134)</name>
    <dbReference type="NCBI Taxonomy" id="264198"/>
    <lineage>
        <taxon>Bacteria</taxon>
        <taxon>Pseudomonadati</taxon>
        <taxon>Pseudomonadota</taxon>
        <taxon>Betaproteobacteria</taxon>
        <taxon>Burkholderiales</taxon>
        <taxon>Burkholderiaceae</taxon>
        <taxon>Cupriavidus</taxon>
    </lineage>
</organism>
<name>RPOA_CUPPJ</name>
<comment type="function">
    <text evidence="1">DNA-dependent RNA polymerase catalyzes the transcription of DNA into RNA using the four ribonucleoside triphosphates as substrates.</text>
</comment>
<comment type="catalytic activity">
    <reaction evidence="1">
        <text>RNA(n) + a ribonucleoside 5'-triphosphate = RNA(n+1) + diphosphate</text>
        <dbReference type="Rhea" id="RHEA:21248"/>
        <dbReference type="Rhea" id="RHEA-COMP:14527"/>
        <dbReference type="Rhea" id="RHEA-COMP:17342"/>
        <dbReference type="ChEBI" id="CHEBI:33019"/>
        <dbReference type="ChEBI" id="CHEBI:61557"/>
        <dbReference type="ChEBI" id="CHEBI:140395"/>
        <dbReference type="EC" id="2.7.7.6"/>
    </reaction>
</comment>
<comment type="subunit">
    <text evidence="1">Homodimer. The RNAP catalytic core consists of 2 alpha, 1 beta, 1 beta' and 1 omega subunit. When a sigma factor is associated with the core the holoenzyme is formed, which can initiate transcription.</text>
</comment>
<comment type="domain">
    <text evidence="1">The N-terminal domain is essential for RNAP assembly and basal transcription, whereas the C-terminal domain is involved in interaction with transcriptional regulators and with upstream promoter elements.</text>
</comment>
<comment type="similarity">
    <text evidence="1">Belongs to the RNA polymerase alpha chain family.</text>
</comment>